<accession>Q8K0R6</accession>
<proteinExistence type="evidence at protein level"/>
<reference key="1">
    <citation type="journal article" date="2005" name="Science">
        <title>The transcriptional landscape of the mammalian genome.</title>
        <authorList>
            <person name="Carninci P."/>
            <person name="Kasukawa T."/>
            <person name="Katayama S."/>
            <person name="Gough J."/>
            <person name="Frith M.C."/>
            <person name="Maeda N."/>
            <person name="Oyama R."/>
            <person name="Ravasi T."/>
            <person name="Lenhard B."/>
            <person name="Wells C."/>
            <person name="Kodzius R."/>
            <person name="Shimokawa K."/>
            <person name="Bajic V.B."/>
            <person name="Brenner S.E."/>
            <person name="Batalov S."/>
            <person name="Forrest A.R."/>
            <person name="Zavolan M."/>
            <person name="Davis M.J."/>
            <person name="Wilming L.G."/>
            <person name="Aidinis V."/>
            <person name="Allen J.E."/>
            <person name="Ambesi-Impiombato A."/>
            <person name="Apweiler R."/>
            <person name="Aturaliya R.N."/>
            <person name="Bailey T.L."/>
            <person name="Bansal M."/>
            <person name="Baxter L."/>
            <person name="Beisel K.W."/>
            <person name="Bersano T."/>
            <person name="Bono H."/>
            <person name="Chalk A.M."/>
            <person name="Chiu K.P."/>
            <person name="Choudhary V."/>
            <person name="Christoffels A."/>
            <person name="Clutterbuck D.R."/>
            <person name="Crowe M.L."/>
            <person name="Dalla E."/>
            <person name="Dalrymple B.P."/>
            <person name="de Bono B."/>
            <person name="Della Gatta G."/>
            <person name="di Bernardo D."/>
            <person name="Down T."/>
            <person name="Engstrom P."/>
            <person name="Fagiolini M."/>
            <person name="Faulkner G."/>
            <person name="Fletcher C.F."/>
            <person name="Fukushima T."/>
            <person name="Furuno M."/>
            <person name="Futaki S."/>
            <person name="Gariboldi M."/>
            <person name="Georgii-Hemming P."/>
            <person name="Gingeras T.R."/>
            <person name="Gojobori T."/>
            <person name="Green R.E."/>
            <person name="Gustincich S."/>
            <person name="Harbers M."/>
            <person name="Hayashi Y."/>
            <person name="Hensch T.K."/>
            <person name="Hirokawa N."/>
            <person name="Hill D."/>
            <person name="Huminiecki L."/>
            <person name="Iacono M."/>
            <person name="Ikeo K."/>
            <person name="Iwama A."/>
            <person name="Ishikawa T."/>
            <person name="Jakt M."/>
            <person name="Kanapin A."/>
            <person name="Katoh M."/>
            <person name="Kawasawa Y."/>
            <person name="Kelso J."/>
            <person name="Kitamura H."/>
            <person name="Kitano H."/>
            <person name="Kollias G."/>
            <person name="Krishnan S.P."/>
            <person name="Kruger A."/>
            <person name="Kummerfeld S.K."/>
            <person name="Kurochkin I.V."/>
            <person name="Lareau L.F."/>
            <person name="Lazarevic D."/>
            <person name="Lipovich L."/>
            <person name="Liu J."/>
            <person name="Liuni S."/>
            <person name="McWilliam S."/>
            <person name="Madan Babu M."/>
            <person name="Madera M."/>
            <person name="Marchionni L."/>
            <person name="Matsuda H."/>
            <person name="Matsuzawa S."/>
            <person name="Miki H."/>
            <person name="Mignone F."/>
            <person name="Miyake S."/>
            <person name="Morris K."/>
            <person name="Mottagui-Tabar S."/>
            <person name="Mulder N."/>
            <person name="Nakano N."/>
            <person name="Nakauchi H."/>
            <person name="Ng P."/>
            <person name="Nilsson R."/>
            <person name="Nishiguchi S."/>
            <person name="Nishikawa S."/>
            <person name="Nori F."/>
            <person name="Ohara O."/>
            <person name="Okazaki Y."/>
            <person name="Orlando V."/>
            <person name="Pang K.C."/>
            <person name="Pavan W.J."/>
            <person name="Pavesi G."/>
            <person name="Pesole G."/>
            <person name="Petrovsky N."/>
            <person name="Piazza S."/>
            <person name="Reed J."/>
            <person name="Reid J.F."/>
            <person name="Ring B.Z."/>
            <person name="Ringwald M."/>
            <person name="Rost B."/>
            <person name="Ruan Y."/>
            <person name="Salzberg S.L."/>
            <person name="Sandelin A."/>
            <person name="Schneider C."/>
            <person name="Schoenbach C."/>
            <person name="Sekiguchi K."/>
            <person name="Semple C.A."/>
            <person name="Seno S."/>
            <person name="Sessa L."/>
            <person name="Sheng Y."/>
            <person name="Shibata Y."/>
            <person name="Shimada H."/>
            <person name="Shimada K."/>
            <person name="Silva D."/>
            <person name="Sinclair B."/>
            <person name="Sperling S."/>
            <person name="Stupka E."/>
            <person name="Sugiura K."/>
            <person name="Sultana R."/>
            <person name="Takenaka Y."/>
            <person name="Taki K."/>
            <person name="Tammoja K."/>
            <person name="Tan S.L."/>
            <person name="Tang S."/>
            <person name="Taylor M.S."/>
            <person name="Tegner J."/>
            <person name="Teichmann S.A."/>
            <person name="Ueda H.R."/>
            <person name="van Nimwegen E."/>
            <person name="Verardo R."/>
            <person name="Wei C.L."/>
            <person name="Yagi K."/>
            <person name="Yamanishi H."/>
            <person name="Zabarovsky E."/>
            <person name="Zhu S."/>
            <person name="Zimmer A."/>
            <person name="Hide W."/>
            <person name="Bult C."/>
            <person name="Grimmond S.M."/>
            <person name="Teasdale R.D."/>
            <person name="Liu E.T."/>
            <person name="Brusic V."/>
            <person name="Quackenbush J."/>
            <person name="Wahlestedt C."/>
            <person name="Mattick J.S."/>
            <person name="Hume D.A."/>
            <person name="Kai C."/>
            <person name="Sasaki D."/>
            <person name="Tomaru Y."/>
            <person name="Fukuda S."/>
            <person name="Kanamori-Katayama M."/>
            <person name="Suzuki M."/>
            <person name="Aoki J."/>
            <person name="Arakawa T."/>
            <person name="Iida J."/>
            <person name="Imamura K."/>
            <person name="Itoh M."/>
            <person name="Kato T."/>
            <person name="Kawaji H."/>
            <person name="Kawagashira N."/>
            <person name="Kawashima T."/>
            <person name="Kojima M."/>
            <person name="Kondo S."/>
            <person name="Konno H."/>
            <person name="Nakano K."/>
            <person name="Ninomiya N."/>
            <person name="Nishio T."/>
            <person name="Okada M."/>
            <person name="Plessy C."/>
            <person name="Shibata K."/>
            <person name="Shiraki T."/>
            <person name="Suzuki S."/>
            <person name="Tagami M."/>
            <person name="Waki K."/>
            <person name="Watahiki A."/>
            <person name="Okamura-Oho Y."/>
            <person name="Suzuki H."/>
            <person name="Kawai J."/>
            <person name="Hayashizaki Y."/>
        </authorList>
    </citation>
    <scope>NUCLEOTIDE SEQUENCE [LARGE SCALE MRNA]</scope>
    <source>
        <strain>C57BL/6J</strain>
        <tissue>Liver</tissue>
    </source>
</reference>
<reference key="2">
    <citation type="journal article" date="2009" name="PLoS Biol.">
        <title>Lineage-specific biology revealed by a finished genome assembly of the mouse.</title>
        <authorList>
            <person name="Church D.M."/>
            <person name="Goodstadt L."/>
            <person name="Hillier L.W."/>
            <person name="Zody M.C."/>
            <person name="Goldstein S."/>
            <person name="She X."/>
            <person name="Bult C.J."/>
            <person name="Agarwala R."/>
            <person name="Cherry J.L."/>
            <person name="DiCuccio M."/>
            <person name="Hlavina W."/>
            <person name="Kapustin Y."/>
            <person name="Meric P."/>
            <person name="Maglott D."/>
            <person name="Birtle Z."/>
            <person name="Marques A.C."/>
            <person name="Graves T."/>
            <person name="Zhou S."/>
            <person name="Teague B."/>
            <person name="Potamousis K."/>
            <person name="Churas C."/>
            <person name="Place M."/>
            <person name="Herschleb J."/>
            <person name="Runnheim R."/>
            <person name="Forrest D."/>
            <person name="Amos-Landgraf J."/>
            <person name="Schwartz D.C."/>
            <person name="Cheng Z."/>
            <person name="Lindblad-Toh K."/>
            <person name="Eichler E.E."/>
            <person name="Ponting C.P."/>
        </authorList>
    </citation>
    <scope>NUCLEOTIDE SEQUENCE [LARGE SCALE GENOMIC DNA]</scope>
    <source>
        <strain>C57BL/6J</strain>
    </source>
</reference>
<reference key="3">
    <citation type="journal article" date="2004" name="Genome Res.">
        <title>The status, quality, and expansion of the NIH full-length cDNA project: the Mammalian Gene Collection (MGC).</title>
        <authorList>
            <consortium name="The MGC Project Team"/>
        </authorList>
    </citation>
    <scope>NUCLEOTIDE SEQUENCE [LARGE SCALE MRNA]</scope>
    <source>
        <strain>FVB/N</strain>
        <tissue>Liver</tissue>
    </source>
</reference>
<reference key="4">
    <citation type="journal article" date="2010" name="Cell">
        <title>A tissue-specific atlas of mouse protein phosphorylation and expression.</title>
        <authorList>
            <person name="Huttlin E.L."/>
            <person name="Jedrychowski M.P."/>
            <person name="Elias J.E."/>
            <person name="Goswami T."/>
            <person name="Rad R."/>
            <person name="Beausoleil S.A."/>
            <person name="Villen J."/>
            <person name="Haas W."/>
            <person name="Sowa M.E."/>
            <person name="Gygi S.P."/>
        </authorList>
    </citation>
    <scope>IDENTIFICATION BY MASS SPECTROMETRY [LARGE SCALE ANALYSIS]</scope>
    <source>
        <tissue>Liver</tissue>
    </source>
</reference>
<organism>
    <name type="scientific">Mus musculus</name>
    <name type="common">Mouse</name>
    <dbReference type="NCBI Taxonomy" id="10090"/>
    <lineage>
        <taxon>Eukaryota</taxon>
        <taxon>Metazoa</taxon>
        <taxon>Chordata</taxon>
        <taxon>Craniata</taxon>
        <taxon>Vertebrata</taxon>
        <taxon>Euteleostomi</taxon>
        <taxon>Mammalia</taxon>
        <taxon>Eutheria</taxon>
        <taxon>Euarchontoglires</taxon>
        <taxon>Glires</taxon>
        <taxon>Rodentia</taxon>
        <taxon>Myomorpha</taxon>
        <taxon>Muroidea</taxon>
        <taxon>Muridae</taxon>
        <taxon>Murinae</taxon>
        <taxon>Mus</taxon>
        <taxon>Mus</taxon>
    </lineage>
</organism>
<evidence type="ECO:0000305" key="1"/>
<keyword id="KW-1185">Reference proteome</keyword>
<protein>
    <recommendedName>
        <fullName>Glycolipid transfer protein domain-containing protein 2</fullName>
    </recommendedName>
</protein>
<sequence>MVMGVSLSPALGRWFRHAIPFAILTLLLLYISIWFFYEWPFPLPAQRTQQSGLRGLKLPSPSPVLGSLLSFPAGVQSCNPERPLPSQTGPAARPLVVPEKEELPCLGPHGALGRMVSPFLACMSPEGDVALSQYLAGWRELLRFLTPLGTVFAFATSEAFNKVTDLEARVHGPNASHYTSLMTMITWERGAGLLQRPGTEPGHSAGSSGSRTLLLLHRALRWSQLCLHRVATGTLGGPDAGTQCGEAYSTALAPHHPWLIRQAARLAILALPSRGRLLQLACPGTGEADARVALARAAGVLEDVYNRTQGLLAGHGLLQLA</sequence>
<comment type="similarity">
    <text evidence="1">Belongs to the GLTP family.</text>
</comment>
<dbReference type="EMBL" id="AK050107">
    <property type="protein sequence ID" value="BAC34069.1"/>
    <property type="molecule type" value="mRNA"/>
</dbReference>
<dbReference type="EMBL" id="AK050212">
    <property type="protein sequence ID" value="BAC34125.1"/>
    <property type="molecule type" value="mRNA"/>
</dbReference>
<dbReference type="EMBL" id="AL592547">
    <property type="status" value="NOT_ANNOTATED_CDS"/>
    <property type="molecule type" value="Genomic_DNA"/>
</dbReference>
<dbReference type="EMBL" id="CR933736">
    <property type="status" value="NOT_ANNOTATED_CDS"/>
    <property type="molecule type" value="Genomic_DNA"/>
</dbReference>
<dbReference type="EMBL" id="BC030735">
    <property type="protein sequence ID" value="AAH30735.1"/>
    <property type="molecule type" value="mRNA"/>
</dbReference>
<dbReference type="CCDS" id="CCDS24952.1"/>
<dbReference type="RefSeq" id="NP_666132.1">
    <property type="nucleotide sequence ID" value="NM_146020.1"/>
</dbReference>
<dbReference type="SMR" id="Q8K0R6"/>
<dbReference type="FunCoup" id="Q8K0R6">
    <property type="interactions" value="104"/>
</dbReference>
<dbReference type="STRING" id="10090.ENSMUSP00000049732"/>
<dbReference type="PhosphoSitePlus" id="Q8K0R6"/>
<dbReference type="SwissPalm" id="Q8K0R6"/>
<dbReference type="jPOST" id="Q8K0R6"/>
<dbReference type="PaxDb" id="10090-ENSMUSP00000049732"/>
<dbReference type="PeptideAtlas" id="Q8K0R6"/>
<dbReference type="ProteomicsDB" id="271235"/>
<dbReference type="Antibodypedia" id="11322">
    <property type="antibodies" value="55 antibodies from 13 providers"/>
</dbReference>
<dbReference type="DNASU" id="216871"/>
<dbReference type="Ensembl" id="ENSMUST00000057685.3">
    <property type="protein sequence ID" value="ENSMUSP00000049732.3"/>
    <property type="gene ID" value="ENSMUSG00000046811.4"/>
</dbReference>
<dbReference type="GeneID" id="216871"/>
<dbReference type="KEGG" id="mmu:216871"/>
<dbReference type="UCSC" id="uc007jvd.1">
    <property type="organism name" value="mouse"/>
</dbReference>
<dbReference type="AGR" id="MGI:2444527"/>
<dbReference type="CTD" id="388323"/>
<dbReference type="MGI" id="MGI:2444527">
    <property type="gene designation" value="Gltpd2"/>
</dbReference>
<dbReference type="VEuPathDB" id="HostDB:ENSMUSG00000046811"/>
<dbReference type="eggNOG" id="KOG4189">
    <property type="taxonomic scope" value="Eukaryota"/>
</dbReference>
<dbReference type="GeneTree" id="ENSGT00940000162518"/>
<dbReference type="HOGENOM" id="CLU_079649_0_0_1"/>
<dbReference type="InParanoid" id="Q8K0R6"/>
<dbReference type="OMA" id="MLGRMMR"/>
<dbReference type="OrthoDB" id="116883at2759"/>
<dbReference type="PhylomeDB" id="Q8K0R6"/>
<dbReference type="TreeFam" id="TF316097"/>
<dbReference type="BioGRID-ORCS" id="216871">
    <property type="hits" value="2 hits in 80 CRISPR screens"/>
</dbReference>
<dbReference type="PRO" id="PR:Q8K0R6"/>
<dbReference type="Proteomes" id="UP000000589">
    <property type="component" value="Chromosome 11"/>
</dbReference>
<dbReference type="RNAct" id="Q8K0R6">
    <property type="molecule type" value="protein"/>
</dbReference>
<dbReference type="Bgee" id="ENSMUSG00000046811">
    <property type="expression patterns" value="Expressed in yolk sac and 28 other cell types or tissues"/>
</dbReference>
<dbReference type="ExpressionAtlas" id="Q8K0R6">
    <property type="expression patterns" value="baseline and differential"/>
</dbReference>
<dbReference type="GO" id="GO:0005737">
    <property type="term" value="C:cytoplasm"/>
    <property type="evidence" value="ECO:0007669"/>
    <property type="project" value="InterPro"/>
</dbReference>
<dbReference type="GO" id="GO:0120013">
    <property type="term" value="F:lipid transfer activity"/>
    <property type="evidence" value="ECO:0007669"/>
    <property type="project" value="InterPro"/>
</dbReference>
<dbReference type="FunFam" id="1.10.3520.10:FF:000002">
    <property type="entry name" value="Ceramide-1-phosphate transfer protein"/>
    <property type="match status" value="1"/>
</dbReference>
<dbReference type="Gene3D" id="1.10.3520.10">
    <property type="entry name" value="Glycolipid transfer protein"/>
    <property type="match status" value="1"/>
</dbReference>
<dbReference type="InterPro" id="IPR036497">
    <property type="entry name" value="GLTP_sf"/>
</dbReference>
<dbReference type="InterPro" id="IPR014830">
    <property type="entry name" value="Glycolipid_transfer_prot_dom"/>
</dbReference>
<dbReference type="PANTHER" id="PTHR10219:SF19">
    <property type="entry name" value="GLYCOLIPID TRANSFER PROTEIN DOMAIN-CONTAINING PROTEIN 2"/>
    <property type="match status" value="1"/>
</dbReference>
<dbReference type="PANTHER" id="PTHR10219">
    <property type="entry name" value="GLYCOLIPID TRANSFER PROTEIN-RELATED"/>
    <property type="match status" value="1"/>
</dbReference>
<dbReference type="Pfam" id="PF08718">
    <property type="entry name" value="GLTP"/>
    <property type="match status" value="1"/>
</dbReference>
<dbReference type="SUPFAM" id="SSF110004">
    <property type="entry name" value="Glycolipid transfer protein, GLTP"/>
    <property type="match status" value="1"/>
</dbReference>
<feature type="chain" id="PRO_0000317163" description="Glycolipid transfer protein domain-containing protein 2">
    <location>
        <begin position="1"/>
        <end position="321"/>
    </location>
</feature>
<gene>
    <name type="primary">Gltpd2</name>
</gene>
<name>GLTD2_MOUSE</name>